<sequence length="665" mass="76622">MKHNRQMPDESLENIKVLLNPKLGKPVKSLTSAQSKACYHTLISNKNLNKTSDEYEKLLANYILLCDEKYLCKTVIPDSRFWAILCDNCQKLRSETLVANLIRIFNVALKCQDSNKNEVIVSICHISRENSQLIGILLQLLSQRPIHIPLFTDTILCITLFLKCSLTLCETSLSHAVEFVPRILILLFQYNFPASMSELLYIEDLQPLILEEFVPLKQRLINFLSSVSIDDYSCSLKADLLTAIKDNSVFQKGLEMEMGDLPSINLLNAYDTFTFLNSPNGSFKRLYTEQLLFGENDFPLYEAIFKLSDQFRRLFNLSGKKENQYSDSERDLKLQIATAVLNRQTCFYKTLELFLRFWIESLAKSQSDLVSLLNLAIITLKYVCLSSSDLEAAIQTKSLLKTQVVALDSMRYKFARTLQLDSIKKEQYRTWSSSIASFDTMLSGQVRDYVRHQRLLQLQKGTWVYAENPLNPEAGTPKVYFLIVSDNHANLLAREFETQTNDLPYLFDNKILTSPGSEALANGRTKVVVLKHITSFKSIELTTPSRRTSSNVYIKLDEANVYTGVELKDRNDRTVLKFYLDTEEGRYIWLDGLKLISPFQHEDISEDTKEQIDTLFDLRKNVQMINLNVRQDIIVPPPEPSDEDEDEEFYNLETLKKVTQNFYFD</sequence>
<comment type="function">
    <text evidence="3">Forms a transiant heterodimeric complex with DCK1, that acts as a guanine nucleotide exchange factor (GEF) for the small GTPase RHO5 (PubMed:25598154). DCK1, LMO1 and RHO5 relocate to mitochondria upon oxidative stress and trigger cell death (PubMed:25598154). The DCK1/LMO1/RHO5 signaling module mediates mitochondrial turnover under nitrogen starvation conditions via mitophagy (PubMed:25598154). The DCK1/LMO1/RHO5 signaling module also plays a role in cell wall integrity signaling (PubMed:25598154).</text>
</comment>
<comment type="subunit">
    <text evidence="3">Forms an active heterodimer with DCK1.</text>
</comment>
<comment type="subcellular location">
    <subcellularLocation>
        <location evidence="1">Cytoplasm</location>
    </subcellularLocation>
    <subcellularLocation>
        <location evidence="3">Mitochondrion</location>
    </subcellularLocation>
    <text evidence="3">Quickly relocates to mitochondria under oxidative stress.</text>
</comment>
<comment type="disruption phenotype">
    <text evidence="3">Leads to hyper-resistance to cell wall stress agents such as calcofluor white and Congo red.</text>
</comment>
<comment type="miscellaneous">
    <text evidence="2">Present with 486 molecules/cell in log phase SD medium.</text>
</comment>
<dbReference type="EMBL" id="X91488">
    <property type="protein sequence ID" value="CAA62762.1"/>
    <property type="molecule type" value="Genomic_DNA"/>
</dbReference>
<dbReference type="EMBL" id="Z73111">
    <property type="protein sequence ID" value="CAA97450.1"/>
    <property type="molecule type" value="Genomic_DNA"/>
</dbReference>
<dbReference type="EMBL" id="Z73112">
    <property type="protein sequence ID" value="CAA97451.1"/>
    <property type="molecule type" value="Genomic_DNA"/>
</dbReference>
<dbReference type="EMBL" id="BK006945">
    <property type="protein sequence ID" value="DAA09311.1"/>
    <property type="molecule type" value="Genomic_DNA"/>
</dbReference>
<dbReference type="PIR" id="S64749">
    <property type="entry name" value="S64749"/>
</dbReference>
<dbReference type="RefSeq" id="NP_013094.1">
    <property type="nucleotide sequence ID" value="NM_001181827.1"/>
</dbReference>
<dbReference type="BioGRID" id="31244">
    <property type="interactions" value="93"/>
</dbReference>
<dbReference type="FunCoup" id="Q07799">
    <property type="interactions" value="23"/>
</dbReference>
<dbReference type="IntAct" id="Q07799">
    <property type="interactions" value="7"/>
</dbReference>
<dbReference type="MINT" id="Q07799"/>
<dbReference type="STRING" id="4932.YLL007C"/>
<dbReference type="iPTMnet" id="Q07799"/>
<dbReference type="PaxDb" id="4932-YLL007C"/>
<dbReference type="PeptideAtlas" id="Q07799"/>
<dbReference type="EnsemblFungi" id="YLL007C_mRNA">
    <property type="protein sequence ID" value="YLL007C"/>
    <property type="gene ID" value="YLL007C"/>
</dbReference>
<dbReference type="GeneID" id="850653"/>
<dbReference type="KEGG" id="sce:YLL007C"/>
<dbReference type="AGR" id="SGD:S000003930"/>
<dbReference type="SGD" id="S000003930">
    <property type="gene designation" value="LMO1"/>
</dbReference>
<dbReference type="VEuPathDB" id="FungiDB:YLL007C"/>
<dbReference type="eggNOG" id="ENOG502R0G6">
    <property type="taxonomic scope" value="Eukaryota"/>
</dbReference>
<dbReference type="HOGENOM" id="CLU_425916_0_0_1"/>
<dbReference type="InParanoid" id="Q07799"/>
<dbReference type="OMA" id="CYHTLIS"/>
<dbReference type="OrthoDB" id="28413at2759"/>
<dbReference type="BioCyc" id="YEAST:G3O-32112-MONOMER"/>
<dbReference type="BioGRID-ORCS" id="850653">
    <property type="hits" value="1 hit in 10 CRISPR screens"/>
</dbReference>
<dbReference type="PRO" id="PR:Q07799"/>
<dbReference type="Proteomes" id="UP000002311">
    <property type="component" value="Chromosome XII"/>
</dbReference>
<dbReference type="RNAct" id="Q07799">
    <property type="molecule type" value="protein"/>
</dbReference>
<dbReference type="GO" id="GO:0005737">
    <property type="term" value="C:cytoplasm"/>
    <property type="evidence" value="ECO:0007005"/>
    <property type="project" value="SGD"/>
</dbReference>
<dbReference type="GO" id="GO:0005739">
    <property type="term" value="C:mitochondrion"/>
    <property type="evidence" value="ECO:0000314"/>
    <property type="project" value="SGD"/>
</dbReference>
<dbReference type="GO" id="GO:0005886">
    <property type="term" value="C:plasma membrane"/>
    <property type="evidence" value="ECO:0000314"/>
    <property type="project" value="SGD"/>
</dbReference>
<dbReference type="GO" id="GO:0007015">
    <property type="term" value="P:actin filament organization"/>
    <property type="evidence" value="ECO:0000318"/>
    <property type="project" value="GO_Central"/>
</dbReference>
<dbReference type="GO" id="GO:0000422">
    <property type="term" value="P:autophagy of mitochondrion"/>
    <property type="evidence" value="ECO:0000315"/>
    <property type="project" value="SGD"/>
</dbReference>
<dbReference type="GO" id="GO:0035556">
    <property type="term" value="P:intracellular signal transduction"/>
    <property type="evidence" value="ECO:0000315"/>
    <property type="project" value="SGD"/>
</dbReference>
<dbReference type="InterPro" id="IPR001849">
    <property type="entry name" value="PH_domain"/>
</dbReference>
<dbReference type="Pfam" id="PF16457">
    <property type="entry name" value="PH_12"/>
    <property type="match status" value="1"/>
</dbReference>
<evidence type="ECO:0000269" key="1">
    <source>
    </source>
</evidence>
<evidence type="ECO:0000269" key="2">
    <source>
    </source>
</evidence>
<evidence type="ECO:0000269" key="3">
    <source>
    </source>
</evidence>
<evidence type="ECO:0000303" key="4">
    <source>
    </source>
</evidence>
<reference key="1">
    <citation type="journal article" date="1996" name="Yeast">
        <title>Sequence analysis of the CEN12 region of Saccharomyces cerevisiae on a 43.7 kb fragment of chromosome XII including an open reading frame homologous to the human cystic fibrosis transmembrane conductance regulator protein CFTR.</title>
        <authorList>
            <person name="Miosga T."/>
            <person name="Zimmermann F.K."/>
        </authorList>
    </citation>
    <scope>NUCLEOTIDE SEQUENCE [GENOMIC DNA]</scope>
    <source>
        <strain>ATCC 90840 / EAY235 / FY23</strain>
    </source>
</reference>
<reference key="2">
    <citation type="journal article" date="1997" name="Nature">
        <title>The nucleotide sequence of Saccharomyces cerevisiae chromosome XII.</title>
        <authorList>
            <person name="Johnston M."/>
            <person name="Hillier L.W."/>
            <person name="Riles L."/>
            <person name="Albermann K."/>
            <person name="Andre B."/>
            <person name="Ansorge W."/>
            <person name="Benes V."/>
            <person name="Brueckner M."/>
            <person name="Delius H."/>
            <person name="Dubois E."/>
            <person name="Duesterhoeft A."/>
            <person name="Entian K.-D."/>
            <person name="Floeth M."/>
            <person name="Goffeau A."/>
            <person name="Hebling U."/>
            <person name="Heumann K."/>
            <person name="Heuss-Neitzel D."/>
            <person name="Hilbert H."/>
            <person name="Hilger F."/>
            <person name="Kleine K."/>
            <person name="Koetter P."/>
            <person name="Louis E.J."/>
            <person name="Messenguy F."/>
            <person name="Mewes H.-W."/>
            <person name="Miosga T."/>
            <person name="Moestl D."/>
            <person name="Mueller-Auer S."/>
            <person name="Nentwich U."/>
            <person name="Obermaier B."/>
            <person name="Piravandi E."/>
            <person name="Pohl T.M."/>
            <person name="Portetelle D."/>
            <person name="Purnelle B."/>
            <person name="Rechmann S."/>
            <person name="Rieger M."/>
            <person name="Rinke M."/>
            <person name="Rose M."/>
            <person name="Scharfe M."/>
            <person name="Scherens B."/>
            <person name="Scholler P."/>
            <person name="Schwager C."/>
            <person name="Schwarz S."/>
            <person name="Underwood A.P."/>
            <person name="Urrestarazu L.A."/>
            <person name="Vandenbol M."/>
            <person name="Verhasselt P."/>
            <person name="Vierendeels F."/>
            <person name="Voet M."/>
            <person name="Volckaert G."/>
            <person name="Voss H."/>
            <person name="Wambutt R."/>
            <person name="Wedler E."/>
            <person name="Wedler H."/>
            <person name="Zimmermann F.K."/>
            <person name="Zollner A."/>
            <person name="Hani J."/>
            <person name="Hoheisel J.D."/>
        </authorList>
    </citation>
    <scope>NUCLEOTIDE SEQUENCE [LARGE SCALE GENOMIC DNA]</scope>
    <source>
        <strain>ATCC 204508 / S288c</strain>
    </source>
</reference>
<reference key="3">
    <citation type="journal article" date="2014" name="G3 (Bethesda)">
        <title>The reference genome sequence of Saccharomyces cerevisiae: Then and now.</title>
        <authorList>
            <person name="Engel S.R."/>
            <person name="Dietrich F.S."/>
            <person name="Fisk D.G."/>
            <person name="Binkley G."/>
            <person name="Balakrishnan R."/>
            <person name="Costanzo M.C."/>
            <person name="Dwight S.S."/>
            <person name="Hitz B.C."/>
            <person name="Karra K."/>
            <person name="Nash R.S."/>
            <person name="Weng S."/>
            <person name="Wong E.D."/>
            <person name="Lloyd P."/>
            <person name="Skrzypek M.S."/>
            <person name="Miyasato S.R."/>
            <person name="Simison M."/>
            <person name="Cherry J.M."/>
        </authorList>
    </citation>
    <scope>GENOME REANNOTATION</scope>
    <source>
        <strain>ATCC 204508 / S288c</strain>
    </source>
</reference>
<reference key="4">
    <citation type="journal article" date="2003" name="Nature">
        <title>Global analysis of protein localization in budding yeast.</title>
        <authorList>
            <person name="Huh W.-K."/>
            <person name="Falvo J.V."/>
            <person name="Gerke L.C."/>
            <person name="Carroll A.S."/>
            <person name="Howson R.W."/>
            <person name="Weissman J.S."/>
            <person name="O'Shea E.K."/>
        </authorList>
    </citation>
    <scope>SUBCELLULAR LOCATION [LARGE SCALE ANALYSIS]</scope>
</reference>
<reference key="5">
    <citation type="journal article" date="2003" name="Nature">
        <title>Global analysis of protein expression in yeast.</title>
        <authorList>
            <person name="Ghaemmaghami S."/>
            <person name="Huh W.-K."/>
            <person name="Bower K."/>
            <person name="Howson R.W."/>
            <person name="Belle A."/>
            <person name="Dephoure N."/>
            <person name="O'Shea E.K."/>
            <person name="Weissman J.S."/>
        </authorList>
    </citation>
    <scope>LEVEL OF PROTEIN EXPRESSION [LARGE SCALE ANALYSIS]</scope>
</reference>
<reference key="6">
    <citation type="journal article" date="2015" name="Mol. Microbiol.">
        <title>Identification of Dck1 and Lmo1 as upstream regulators of the small GTPase Rho5 in Saccharomyces cerevisiae.</title>
        <authorList>
            <person name="Schmitz H.P."/>
            <person name="Jendretzki A."/>
            <person name="Wittland J."/>
            <person name="Wiechert J."/>
            <person name="Heinisch J.J."/>
        </authorList>
    </citation>
    <scope>INTERACTION WITH DCK1</scope>
    <scope>SUBCELLULAR LOCATION</scope>
    <scope>DISRUPTION PHENOTYPE</scope>
    <scope>FUNCTION</scope>
</reference>
<organism>
    <name type="scientific">Saccharomyces cerevisiae (strain ATCC 204508 / S288c)</name>
    <name type="common">Baker's yeast</name>
    <dbReference type="NCBI Taxonomy" id="559292"/>
    <lineage>
        <taxon>Eukaryota</taxon>
        <taxon>Fungi</taxon>
        <taxon>Dikarya</taxon>
        <taxon>Ascomycota</taxon>
        <taxon>Saccharomycotina</taxon>
        <taxon>Saccharomycetes</taxon>
        <taxon>Saccharomycetales</taxon>
        <taxon>Saccharomycetaceae</taxon>
        <taxon>Saccharomyces</taxon>
    </lineage>
</organism>
<keyword id="KW-0963">Cytoplasm</keyword>
<keyword id="KW-0496">Mitochondrion</keyword>
<keyword id="KW-1185">Reference proteome</keyword>
<name>LMO1_YEAST</name>
<proteinExistence type="evidence at protein level"/>
<feature type="chain" id="PRO_0000247098" description="ELMO family protein LMO1">
    <location>
        <begin position="1"/>
        <end position="665"/>
    </location>
</feature>
<protein>
    <recommendedName>
        <fullName evidence="4">ELMO family protein LMO1</fullName>
    </recommendedName>
</protein>
<accession>Q07799</accession>
<accession>D6VXZ5</accession>
<accession>E9PAG4</accession>
<gene>
    <name evidence="4" type="primary">LMO1</name>
    <name type="ordered locus">YLL007C</name>
    <name type="ORF">L1353</name>
</gene>